<evidence type="ECO:0000255" key="1">
    <source>
        <dbReference type="HAMAP-Rule" id="MF_01006"/>
    </source>
</evidence>
<protein>
    <recommendedName>
        <fullName evidence="1">Undecaprenyl-diphosphatase</fullName>
        <ecNumber evidence="1">3.6.1.27</ecNumber>
    </recommendedName>
    <alternativeName>
        <fullName evidence="1">Bacitracin resistance protein</fullName>
    </alternativeName>
    <alternativeName>
        <fullName evidence="1">Undecaprenyl pyrophosphate phosphatase</fullName>
    </alternativeName>
</protein>
<organism>
    <name type="scientific">Laribacter hongkongensis (strain HLHK9)</name>
    <dbReference type="NCBI Taxonomy" id="557598"/>
    <lineage>
        <taxon>Bacteria</taxon>
        <taxon>Pseudomonadati</taxon>
        <taxon>Pseudomonadota</taxon>
        <taxon>Betaproteobacteria</taxon>
        <taxon>Neisseriales</taxon>
        <taxon>Aquaspirillaceae</taxon>
        <taxon>Laribacter</taxon>
    </lineage>
</organism>
<proteinExistence type="inferred from homology"/>
<feature type="chain" id="PRO_1000148817" description="Undecaprenyl-diphosphatase">
    <location>
        <begin position="1"/>
        <end position="273"/>
    </location>
</feature>
<feature type="transmembrane region" description="Helical" evidence="1">
    <location>
        <begin position="43"/>
        <end position="63"/>
    </location>
</feature>
<feature type="transmembrane region" description="Helical" evidence="1">
    <location>
        <begin position="82"/>
        <end position="102"/>
    </location>
</feature>
<feature type="transmembrane region" description="Helical" evidence="1">
    <location>
        <begin position="109"/>
        <end position="129"/>
    </location>
</feature>
<feature type="transmembrane region" description="Helical" evidence="1">
    <location>
        <begin position="185"/>
        <end position="205"/>
    </location>
</feature>
<feature type="transmembrane region" description="Helical" evidence="1">
    <location>
        <begin position="214"/>
        <end position="234"/>
    </location>
</feature>
<feature type="transmembrane region" description="Helical" evidence="1">
    <location>
        <begin position="249"/>
        <end position="269"/>
    </location>
</feature>
<name>UPPP_LARHH</name>
<comment type="function">
    <text evidence="1">Catalyzes the dephosphorylation of undecaprenyl diphosphate (UPP). Confers resistance to bacitracin.</text>
</comment>
<comment type="catalytic activity">
    <reaction evidence="1">
        <text>di-trans,octa-cis-undecaprenyl diphosphate + H2O = di-trans,octa-cis-undecaprenyl phosphate + phosphate + H(+)</text>
        <dbReference type="Rhea" id="RHEA:28094"/>
        <dbReference type="ChEBI" id="CHEBI:15377"/>
        <dbReference type="ChEBI" id="CHEBI:15378"/>
        <dbReference type="ChEBI" id="CHEBI:43474"/>
        <dbReference type="ChEBI" id="CHEBI:58405"/>
        <dbReference type="ChEBI" id="CHEBI:60392"/>
        <dbReference type="EC" id="3.6.1.27"/>
    </reaction>
</comment>
<comment type="subcellular location">
    <subcellularLocation>
        <location evidence="1">Cell inner membrane</location>
        <topology evidence="1">Multi-pass membrane protein</topology>
    </subcellularLocation>
</comment>
<comment type="miscellaneous">
    <text>Bacitracin is thought to be involved in the inhibition of peptidoglycan synthesis by sequestering undecaprenyl diphosphate, thereby reducing the pool of lipid carrier available.</text>
</comment>
<comment type="similarity">
    <text evidence="1">Belongs to the UppP family.</text>
</comment>
<dbReference type="EC" id="3.6.1.27" evidence="1"/>
<dbReference type="EMBL" id="CP001154">
    <property type="protein sequence ID" value="ACO75918.1"/>
    <property type="molecule type" value="Genomic_DNA"/>
</dbReference>
<dbReference type="RefSeq" id="WP_012698381.1">
    <property type="nucleotide sequence ID" value="NC_012559.1"/>
</dbReference>
<dbReference type="SMR" id="C1D4X7"/>
<dbReference type="STRING" id="557598.LHK_02940"/>
<dbReference type="KEGG" id="lhk:LHK_02940"/>
<dbReference type="eggNOG" id="COG1968">
    <property type="taxonomic scope" value="Bacteria"/>
</dbReference>
<dbReference type="HOGENOM" id="CLU_060296_2_0_4"/>
<dbReference type="Proteomes" id="UP000002010">
    <property type="component" value="Chromosome"/>
</dbReference>
<dbReference type="GO" id="GO:0005886">
    <property type="term" value="C:plasma membrane"/>
    <property type="evidence" value="ECO:0007669"/>
    <property type="project" value="UniProtKB-SubCell"/>
</dbReference>
<dbReference type="GO" id="GO:0050380">
    <property type="term" value="F:undecaprenyl-diphosphatase activity"/>
    <property type="evidence" value="ECO:0007669"/>
    <property type="project" value="UniProtKB-UniRule"/>
</dbReference>
<dbReference type="GO" id="GO:0071555">
    <property type="term" value="P:cell wall organization"/>
    <property type="evidence" value="ECO:0007669"/>
    <property type="project" value="UniProtKB-KW"/>
</dbReference>
<dbReference type="GO" id="GO:0009252">
    <property type="term" value="P:peptidoglycan biosynthetic process"/>
    <property type="evidence" value="ECO:0007669"/>
    <property type="project" value="UniProtKB-KW"/>
</dbReference>
<dbReference type="GO" id="GO:0008360">
    <property type="term" value="P:regulation of cell shape"/>
    <property type="evidence" value="ECO:0007669"/>
    <property type="project" value="UniProtKB-KW"/>
</dbReference>
<dbReference type="GO" id="GO:0046677">
    <property type="term" value="P:response to antibiotic"/>
    <property type="evidence" value="ECO:0007669"/>
    <property type="project" value="UniProtKB-UniRule"/>
</dbReference>
<dbReference type="HAMAP" id="MF_01006">
    <property type="entry name" value="Undec_diphosphatase"/>
    <property type="match status" value="1"/>
</dbReference>
<dbReference type="InterPro" id="IPR003824">
    <property type="entry name" value="UppP"/>
</dbReference>
<dbReference type="NCBIfam" id="NF001389">
    <property type="entry name" value="PRK00281.1-2"/>
    <property type="match status" value="1"/>
</dbReference>
<dbReference type="NCBIfam" id="NF001390">
    <property type="entry name" value="PRK00281.1-4"/>
    <property type="match status" value="1"/>
</dbReference>
<dbReference type="NCBIfam" id="TIGR00753">
    <property type="entry name" value="undec_PP_bacA"/>
    <property type="match status" value="1"/>
</dbReference>
<dbReference type="PANTHER" id="PTHR30622">
    <property type="entry name" value="UNDECAPRENYL-DIPHOSPHATASE"/>
    <property type="match status" value="1"/>
</dbReference>
<dbReference type="PANTHER" id="PTHR30622:SF3">
    <property type="entry name" value="UNDECAPRENYL-DIPHOSPHATASE"/>
    <property type="match status" value="1"/>
</dbReference>
<dbReference type="Pfam" id="PF02673">
    <property type="entry name" value="BacA"/>
    <property type="match status" value="1"/>
</dbReference>
<accession>C1D4X7</accession>
<reference key="1">
    <citation type="journal article" date="2009" name="PLoS Genet.">
        <title>The complete genome and proteome of Laribacter hongkongensis reveal potential mechanisms for adaptations to different temperatures and habitats.</title>
        <authorList>
            <person name="Woo P.C.Y."/>
            <person name="Lau S.K.P."/>
            <person name="Tse H."/>
            <person name="Teng J.L.L."/>
            <person name="Curreem S.O."/>
            <person name="Tsang A.K.L."/>
            <person name="Fan R.Y.Y."/>
            <person name="Wong G.K.M."/>
            <person name="Huang Y."/>
            <person name="Loman N.J."/>
            <person name="Snyder L.A.S."/>
            <person name="Cai J.J."/>
            <person name="Huang J.-D."/>
            <person name="Mak W."/>
            <person name="Pallen M.J."/>
            <person name="Lok S."/>
            <person name="Yuen K.-Y."/>
        </authorList>
    </citation>
    <scope>NUCLEOTIDE SEQUENCE [LARGE SCALE GENOMIC DNA]</scope>
    <source>
        <strain>HLHK9</strain>
    </source>
</reference>
<keyword id="KW-0046">Antibiotic resistance</keyword>
<keyword id="KW-0997">Cell inner membrane</keyword>
<keyword id="KW-1003">Cell membrane</keyword>
<keyword id="KW-0133">Cell shape</keyword>
<keyword id="KW-0961">Cell wall biogenesis/degradation</keyword>
<keyword id="KW-0378">Hydrolase</keyword>
<keyword id="KW-0472">Membrane</keyword>
<keyword id="KW-0573">Peptidoglycan synthesis</keyword>
<keyword id="KW-1185">Reference proteome</keyword>
<keyword id="KW-0812">Transmembrane</keyword>
<keyword id="KW-1133">Transmembrane helix</keyword>
<sequence length="273" mass="30158">MDWLLLAKAAIMGIVEGLTEFFPISSTGHLIVVGDLINFDDRIGNVFEVVIQLGAILAVCWEYRARLWQVAIDLPTSTMARKFVLNLLIAFLPAAIVGVLLIKTIKSYLFNPVAVACALVVGGLVILWAERRECTARVHRIDDMSHLDALKVGLAQIASLIPGTSRSGSTIIGGMLFGLDRRVATEFSFFLAIPIMFAATAYDVLKHWELFTAADLPTFGTGFLFAFLSAFVAVRGLIRFVASHTFNVFAWYRIVFGLIILGSWWLGWINWAS</sequence>
<gene>
    <name evidence="1" type="primary">uppP</name>
    <name type="ordered locus">LHK_02940</name>
</gene>